<gene>
    <name type="primary">YAE1</name>
    <name type="ORF">SNOG_00668</name>
</gene>
<sequence length="217" mass="23906">MNALGDVSPHTGPTQLAAGHAPPTPPHEDPLDDIYGSAPGSPSLLGVDPLNLDHPRERTHEILSDLPSRQRALDTDAYREGLSNSKGQYVQEGFDEGYSLGANLGIRVGYILGVLQGFVAAWRGSNDNLFKDTKKVYDTAQKELAIQELLSQQWVTEEGIWNWEVHGVEDDPTFREVAEQHPVVRKWTATVESMAAQWGVDLQAVEKVHGSNEEEQS</sequence>
<protein>
    <recommendedName>
        <fullName>Protein YAE1</fullName>
    </recommendedName>
</protein>
<evidence type="ECO:0000250" key="1">
    <source>
        <dbReference type="UniProtKB" id="P47118"/>
    </source>
</evidence>
<evidence type="ECO:0000250" key="2">
    <source>
        <dbReference type="UniProtKB" id="Q9NRH1"/>
    </source>
</evidence>
<evidence type="ECO:0000256" key="3">
    <source>
        <dbReference type="SAM" id="MobiDB-lite"/>
    </source>
</evidence>
<evidence type="ECO:0000305" key="4"/>
<feature type="chain" id="PRO_0000324431" description="Protein YAE1">
    <location>
        <begin position="1"/>
        <end position="217"/>
    </location>
</feature>
<feature type="region of interest" description="Disordered" evidence="3">
    <location>
        <begin position="1"/>
        <end position="52"/>
    </location>
</feature>
<feature type="region of interest" description="deca-GX3 motif; required for interaction with LTO1" evidence="1">
    <location>
        <begin position="77"/>
        <end position="117"/>
    </location>
</feature>
<accession>Q0V5P6</accession>
<organism>
    <name type="scientific">Phaeosphaeria nodorum (strain SN15 / ATCC MYA-4574 / FGSC 10173)</name>
    <name type="common">Glume blotch fungus</name>
    <name type="synonym">Parastagonospora nodorum</name>
    <dbReference type="NCBI Taxonomy" id="321614"/>
    <lineage>
        <taxon>Eukaryota</taxon>
        <taxon>Fungi</taxon>
        <taxon>Dikarya</taxon>
        <taxon>Ascomycota</taxon>
        <taxon>Pezizomycotina</taxon>
        <taxon>Dothideomycetes</taxon>
        <taxon>Pleosporomycetidae</taxon>
        <taxon>Pleosporales</taxon>
        <taxon>Pleosporineae</taxon>
        <taxon>Phaeosphaeriaceae</taxon>
        <taxon>Parastagonospora</taxon>
    </lineage>
</organism>
<keyword id="KW-0963">Cytoplasm</keyword>
<keyword id="KW-0539">Nucleus</keyword>
<comment type="function">
    <text evidence="2">The complex LTO1:YAE1 may function as a target specific adapter that probably recruits apo-RPLI1 to the cytosolic iron-sulfur protein assembly (CIA) complex machinery. May be required for biogenesis of the large ribosomal subunit and initiation of translation.</text>
</comment>
<comment type="subunit">
    <text evidence="2">May form a complex with LTO1.</text>
</comment>
<comment type="subcellular location">
    <subcellularLocation>
        <location evidence="1">Cytoplasm</location>
    </subcellularLocation>
    <subcellularLocation>
        <location evidence="1">Nucleus</location>
    </subcellularLocation>
</comment>
<comment type="similarity">
    <text evidence="4">Belongs to the YAE1 family.</text>
</comment>
<proteinExistence type="inferred from homology"/>
<dbReference type="EMBL" id="CH445325">
    <property type="protein sequence ID" value="EAT92163.1"/>
    <property type="molecule type" value="Genomic_DNA"/>
</dbReference>
<dbReference type="RefSeq" id="XP_001791348.1">
    <property type="nucleotide sequence ID" value="XM_001791296.1"/>
</dbReference>
<dbReference type="STRING" id="321614.Q0V5P6"/>
<dbReference type="EnsemblFungi" id="SNOT_00668">
    <property type="protein sequence ID" value="SNOT_00668"/>
    <property type="gene ID" value="SNOG_00668"/>
</dbReference>
<dbReference type="GeneID" id="5967910"/>
<dbReference type="KEGG" id="pno:SNOG_00668"/>
<dbReference type="VEuPathDB" id="FungiDB:JI435_006680"/>
<dbReference type="eggNOG" id="KOG4774">
    <property type="taxonomic scope" value="Eukaryota"/>
</dbReference>
<dbReference type="HOGENOM" id="CLU_066684_0_1_1"/>
<dbReference type="InParanoid" id="Q0V5P6"/>
<dbReference type="OMA" id="MHFQPVE"/>
<dbReference type="OrthoDB" id="20086at2759"/>
<dbReference type="Proteomes" id="UP000001055">
    <property type="component" value="Unassembled WGS sequence"/>
</dbReference>
<dbReference type="GO" id="GO:0005737">
    <property type="term" value="C:cytoplasm"/>
    <property type="evidence" value="ECO:0007669"/>
    <property type="project" value="UniProtKB-SubCell"/>
</dbReference>
<dbReference type="GO" id="GO:0005634">
    <property type="term" value="C:nucleus"/>
    <property type="evidence" value="ECO:0007669"/>
    <property type="project" value="UniProtKB-SubCell"/>
</dbReference>
<dbReference type="GO" id="GO:0051604">
    <property type="term" value="P:protein maturation"/>
    <property type="evidence" value="ECO:0000250"/>
    <property type="project" value="UniProtKB"/>
</dbReference>
<dbReference type="InterPro" id="IPR019191">
    <property type="entry name" value="Essential_protein_Yae1_N"/>
</dbReference>
<dbReference type="InterPro" id="IPR038881">
    <property type="entry name" value="Yae1-like"/>
</dbReference>
<dbReference type="PANTHER" id="PTHR18829">
    <property type="entry name" value="PROTEIN YAE1 HOMOLOG"/>
    <property type="match status" value="1"/>
</dbReference>
<dbReference type="PANTHER" id="PTHR18829:SF0">
    <property type="entry name" value="PROTEIN YAE1 HOMOLOG"/>
    <property type="match status" value="1"/>
</dbReference>
<dbReference type="Pfam" id="PF09811">
    <property type="entry name" value="Yae1_N"/>
    <property type="match status" value="1"/>
</dbReference>
<name>YAE1_PHANO</name>
<reference key="1">
    <citation type="journal article" date="2007" name="Plant Cell">
        <title>Dothideomycete-plant interactions illuminated by genome sequencing and EST analysis of the wheat pathogen Stagonospora nodorum.</title>
        <authorList>
            <person name="Hane J.K."/>
            <person name="Lowe R.G.T."/>
            <person name="Solomon P.S."/>
            <person name="Tan K.-C."/>
            <person name="Schoch C.L."/>
            <person name="Spatafora J.W."/>
            <person name="Crous P.W."/>
            <person name="Kodira C.D."/>
            <person name="Birren B.W."/>
            <person name="Galagan J.E."/>
            <person name="Torriani S.F.F."/>
            <person name="McDonald B.A."/>
            <person name="Oliver R.P."/>
        </authorList>
    </citation>
    <scope>NUCLEOTIDE SEQUENCE [LARGE SCALE GENOMIC DNA]</scope>
    <source>
        <strain>SN15 / ATCC MYA-4574 / FGSC 10173</strain>
    </source>
</reference>